<comment type="function">
    <text evidence="1">Catalyzes the ATP-dependent conversion of 7-carboxy-7-deazaguanine (CDG) to 7-cyano-7-deazaguanine (preQ(0)).</text>
</comment>
<comment type="catalytic activity">
    <reaction evidence="1">
        <text>7-carboxy-7-deazaguanine + NH4(+) + ATP = 7-cyano-7-deazaguanine + ADP + phosphate + H2O + H(+)</text>
        <dbReference type="Rhea" id="RHEA:27982"/>
        <dbReference type="ChEBI" id="CHEBI:15377"/>
        <dbReference type="ChEBI" id="CHEBI:15378"/>
        <dbReference type="ChEBI" id="CHEBI:28938"/>
        <dbReference type="ChEBI" id="CHEBI:30616"/>
        <dbReference type="ChEBI" id="CHEBI:43474"/>
        <dbReference type="ChEBI" id="CHEBI:45075"/>
        <dbReference type="ChEBI" id="CHEBI:61036"/>
        <dbReference type="ChEBI" id="CHEBI:456216"/>
        <dbReference type="EC" id="6.3.4.20"/>
    </reaction>
</comment>
<comment type="cofactor">
    <cofactor evidence="1">
        <name>Zn(2+)</name>
        <dbReference type="ChEBI" id="CHEBI:29105"/>
    </cofactor>
    <text evidence="1">Binds 1 zinc ion per subunit.</text>
</comment>
<comment type="pathway">
    <text evidence="1">Purine metabolism; 7-cyano-7-deazaguanine biosynthesis.</text>
</comment>
<comment type="subunit">
    <text evidence="1">Homodimer.</text>
</comment>
<comment type="similarity">
    <text evidence="1">Belongs to the QueC family.</text>
</comment>
<accession>B8G1I4</accession>
<keyword id="KW-0067">ATP-binding</keyword>
<keyword id="KW-0436">Ligase</keyword>
<keyword id="KW-0479">Metal-binding</keyword>
<keyword id="KW-0547">Nucleotide-binding</keyword>
<keyword id="KW-0671">Queuosine biosynthesis</keyword>
<keyword id="KW-0862">Zinc</keyword>
<organism>
    <name type="scientific">Desulfitobacterium hafniense (strain DSM 10664 / DCB-2)</name>
    <dbReference type="NCBI Taxonomy" id="272564"/>
    <lineage>
        <taxon>Bacteria</taxon>
        <taxon>Bacillati</taxon>
        <taxon>Bacillota</taxon>
        <taxon>Clostridia</taxon>
        <taxon>Eubacteriales</taxon>
        <taxon>Desulfitobacteriaceae</taxon>
        <taxon>Desulfitobacterium</taxon>
    </lineage>
</organism>
<protein>
    <recommendedName>
        <fullName evidence="1">7-cyano-7-deazaguanine synthase</fullName>
        <ecNumber evidence="1">6.3.4.20</ecNumber>
    </recommendedName>
    <alternativeName>
        <fullName evidence="1">7-cyano-7-carbaguanine synthase</fullName>
    </alternativeName>
    <alternativeName>
        <fullName evidence="1">PreQ(0) synthase</fullName>
    </alternativeName>
    <alternativeName>
        <fullName evidence="1">Queuosine biosynthesis protein QueC</fullName>
    </alternativeName>
</protein>
<name>QUEC_DESHD</name>
<sequence length="233" mass="25171">MKKAVVLLSGGLDSTTCMSVAHKAGYELYPLSFDYGQRHQRELEAAKAVAQYYKVKEHRLIKIEHVGGSALTDASIQVPDYTEDGQIPVTYVPARNILFLSYALGYGEVIGAEAIFIGISSVDYSGYPDCRPEFLQAFQKVVDVGTKAGVSGQTIAIKAPLLYLSKGETIQLAAENGAPLHHTTSCYRGGEKACGTCDSCTLRLKGFAEAGIKDPIDYVNQGDRSCFSTPLED</sequence>
<reference key="1">
    <citation type="journal article" date="2012" name="BMC Microbiol.">
        <title>Genome sequence of Desulfitobacterium hafniense DCB-2, a Gram-positive anaerobe capable of dehalogenation and metal reduction.</title>
        <authorList>
            <person name="Kim S.H."/>
            <person name="Harzman C."/>
            <person name="Davis J.K."/>
            <person name="Hutcheson R."/>
            <person name="Broderick J.B."/>
            <person name="Marsh T.L."/>
            <person name="Tiedje J.M."/>
        </authorList>
    </citation>
    <scope>NUCLEOTIDE SEQUENCE [LARGE SCALE GENOMIC DNA]</scope>
    <source>
        <strain>DSM 10664 / DCB-2</strain>
    </source>
</reference>
<dbReference type="EC" id="6.3.4.20" evidence="1"/>
<dbReference type="EMBL" id="CP001336">
    <property type="protein sequence ID" value="ACL21237.1"/>
    <property type="molecule type" value="Genomic_DNA"/>
</dbReference>
<dbReference type="RefSeq" id="WP_005812679.1">
    <property type="nucleotide sequence ID" value="NC_011830.1"/>
</dbReference>
<dbReference type="SMR" id="B8G1I4"/>
<dbReference type="KEGG" id="dhd:Dhaf_3217"/>
<dbReference type="HOGENOM" id="CLU_081854_1_0_9"/>
<dbReference type="UniPathway" id="UPA00391"/>
<dbReference type="Proteomes" id="UP000007726">
    <property type="component" value="Chromosome"/>
</dbReference>
<dbReference type="GO" id="GO:0005524">
    <property type="term" value="F:ATP binding"/>
    <property type="evidence" value="ECO:0007669"/>
    <property type="project" value="UniProtKB-UniRule"/>
</dbReference>
<dbReference type="GO" id="GO:0016879">
    <property type="term" value="F:ligase activity, forming carbon-nitrogen bonds"/>
    <property type="evidence" value="ECO:0007669"/>
    <property type="project" value="UniProtKB-UniRule"/>
</dbReference>
<dbReference type="GO" id="GO:0008270">
    <property type="term" value="F:zinc ion binding"/>
    <property type="evidence" value="ECO:0007669"/>
    <property type="project" value="UniProtKB-UniRule"/>
</dbReference>
<dbReference type="GO" id="GO:0008616">
    <property type="term" value="P:queuosine biosynthetic process"/>
    <property type="evidence" value="ECO:0007669"/>
    <property type="project" value="UniProtKB-UniRule"/>
</dbReference>
<dbReference type="CDD" id="cd01995">
    <property type="entry name" value="QueC-like"/>
    <property type="match status" value="1"/>
</dbReference>
<dbReference type="Gene3D" id="3.40.50.620">
    <property type="entry name" value="HUPs"/>
    <property type="match status" value="1"/>
</dbReference>
<dbReference type="HAMAP" id="MF_01633">
    <property type="entry name" value="QueC"/>
    <property type="match status" value="1"/>
</dbReference>
<dbReference type="InterPro" id="IPR018317">
    <property type="entry name" value="QueC"/>
</dbReference>
<dbReference type="InterPro" id="IPR014729">
    <property type="entry name" value="Rossmann-like_a/b/a_fold"/>
</dbReference>
<dbReference type="NCBIfam" id="TIGR00364">
    <property type="entry name" value="7-cyano-7-deazaguanine synthase QueC"/>
    <property type="match status" value="1"/>
</dbReference>
<dbReference type="PANTHER" id="PTHR42914">
    <property type="entry name" value="7-CYANO-7-DEAZAGUANINE SYNTHASE"/>
    <property type="match status" value="1"/>
</dbReference>
<dbReference type="PANTHER" id="PTHR42914:SF1">
    <property type="entry name" value="7-CYANO-7-DEAZAGUANINE SYNTHASE"/>
    <property type="match status" value="1"/>
</dbReference>
<dbReference type="Pfam" id="PF06508">
    <property type="entry name" value="QueC"/>
    <property type="match status" value="1"/>
</dbReference>
<dbReference type="PIRSF" id="PIRSF006293">
    <property type="entry name" value="ExsB"/>
    <property type="match status" value="1"/>
</dbReference>
<dbReference type="SUPFAM" id="SSF52402">
    <property type="entry name" value="Adenine nucleotide alpha hydrolases-like"/>
    <property type="match status" value="1"/>
</dbReference>
<gene>
    <name evidence="1" type="primary">queC</name>
    <name type="ordered locus">Dhaf_3217</name>
</gene>
<proteinExistence type="inferred from homology"/>
<feature type="chain" id="PRO_1000186585" description="7-cyano-7-deazaguanine synthase">
    <location>
        <begin position="1"/>
        <end position="233"/>
    </location>
</feature>
<feature type="binding site" evidence="1">
    <location>
        <begin position="8"/>
        <end position="18"/>
    </location>
    <ligand>
        <name>ATP</name>
        <dbReference type="ChEBI" id="CHEBI:30616"/>
    </ligand>
</feature>
<feature type="binding site" evidence="1">
    <location>
        <position position="186"/>
    </location>
    <ligand>
        <name>Zn(2+)</name>
        <dbReference type="ChEBI" id="CHEBI:29105"/>
    </ligand>
</feature>
<feature type="binding site" evidence="1">
    <location>
        <position position="194"/>
    </location>
    <ligand>
        <name>Zn(2+)</name>
        <dbReference type="ChEBI" id="CHEBI:29105"/>
    </ligand>
</feature>
<feature type="binding site" evidence="1">
    <location>
        <position position="197"/>
    </location>
    <ligand>
        <name>Zn(2+)</name>
        <dbReference type="ChEBI" id="CHEBI:29105"/>
    </ligand>
</feature>
<feature type="binding site" evidence="1">
    <location>
        <position position="200"/>
    </location>
    <ligand>
        <name>Zn(2+)</name>
        <dbReference type="ChEBI" id="CHEBI:29105"/>
    </ligand>
</feature>
<evidence type="ECO:0000255" key="1">
    <source>
        <dbReference type="HAMAP-Rule" id="MF_01633"/>
    </source>
</evidence>